<proteinExistence type="evidence at protein level"/>
<name>RRAS_HUMAN</name>
<organism>
    <name type="scientific">Homo sapiens</name>
    <name type="common">Human</name>
    <dbReference type="NCBI Taxonomy" id="9606"/>
    <lineage>
        <taxon>Eukaryota</taxon>
        <taxon>Metazoa</taxon>
        <taxon>Chordata</taxon>
        <taxon>Craniata</taxon>
        <taxon>Vertebrata</taxon>
        <taxon>Euteleostomi</taxon>
        <taxon>Mammalia</taxon>
        <taxon>Eutheria</taxon>
        <taxon>Euarchontoglires</taxon>
        <taxon>Primates</taxon>
        <taxon>Haplorrhini</taxon>
        <taxon>Catarrhini</taxon>
        <taxon>Hominidae</taxon>
        <taxon>Homo</taxon>
    </lineage>
</organism>
<keyword id="KW-0002">3D-structure</keyword>
<keyword id="KW-1003">Cell membrane</keyword>
<keyword id="KW-0903">Direct protein sequencing</keyword>
<keyword id="KW-0342">GTP-binding</keyword>
<keyword id="KW-0378">Hydrolase</keyword>
<keyword id="KW-0449">Lipoprotein</keyword>
<keyword id="KW-0472">Membrane</keyword>
<keyword id="KW-0488">Methylation</keyword>
<keyword id="KW-0547">Nucleotide-binding</keyword>
<keyword id="KW-0564">Palmitate</keyword>
<keyword id="KW-0636">Prenylation</keyword>
<keyword id="KW-1267">Proteomics identification</keyword>
<keyword id="KW-1185">Reference proteome</keyword>
<dbReference type="EC" id="3.6.5.2" evidence="9"/>
<dbReference type="EMBL" id="M14949">
    <property type="protein sequence ID" value="AAA60256.1"/>
    <property type="molecule type" value="Genomic_DNA"/>
</dbReference>
<dbReference type="EMBL" id="M14948">
    <property type="protein sequence ID" value="AAA60256.1"/>
    <property type="status" value="JOINED"/>
    <property type="molecule type" value="Genomic_DNA"/>
</dbReference>
<dbReference type="EMBL" id="AF493920">
    <property type="protein sequence ID" value="AAM12634.1"/>
    <property type="molecule type" value="mRNA"/>
</dbReference>
<dbReference type="EMBL" id="BT006805">
    <property type="protein sequence ID" value="AAP35451.1"/>
    <property type="molecule type" value="mRNA"/>
</dbReference>
<dbReference type="EMBL" id="CR541944">
    <property type="protein sequence ID" value="CAG46742.1"/>
    <property type="molecule type" value="mRNA"/>
</dbReference>
<dbReference type="EMBL" id="CR541967">
    <property type="protein sequence ID" value="CAG46765.1"/>
    <property type="molecule type" value="mRNA"/>
</dbReference>
<dbReference type="EMBL" id="CH471177">
    <property type="protein sequence ID" value="EAW52506.1"/>
    <property type="molecule type" value="Genomic_DNA"/>
</dbReference>
<dbReference type="EMBL" id="BC016286">
    <property type="protein sequence ID" value="AAH16286.1"/>
    <property type="molecule type" value="mRNA"/>
</dbReference>
<dbReference type="EMBL" id="BC016318">
    <property type="protein sequence ID" value="AAH16318.1"/>
    <property type="molecule type" value="mRNA"/>
</dbReference>
<dbReference type="CCDS" id="CCDS12774.1"/>
<dbReference type="PIR" id="A26159">
    <property type="entry name" value="TVHURR"/>
</dbReference>
<dbReference type="RefSeq" id="NP_006261.1">
    <property type="nucleotide sequence ID" value="NM_006270.5"/>
</dbReference>
<dbReference type="PDB" id="2FN4">
    <property type="method" value="X-ray"/>
    <property type="resolution" value="1.65 A"/>
    <property type="chains" value="A=23-201"/>
</dbReference>
<dbReference type="PDB" id="7S0Z">
    <property type="method" value="X-ray"/>
    <property type="resolution" value="2.34 A"/>
    <property type="chains" value="C/D=23-201"/>
</dbReference>
<dbReference type="PDBsum" id="2FN4"/>
<dbReference type="PDBsum" id="7S0Z"/>
<dbReference type="SMR" id="P10301"/>
<dbReference type="BioGRID" id="112151">
    <property type="interactions" value="66"/>
</dbReference>
<dbReference type="FunCoup" id="P10301">
    <property type="interactions" value="1074"/>
</dbReference>
<dbReference type="IntAct" id="P10301">
    <property type="interactions" value="52"/>
</dbReference>
<dbReference type="MINT" id="P10301"/>
<dbReference type="STRING" id="9606.ENSP00000246792"/>
<dbReference type="GlyGen" id="P10301">
    <property type="glycosylation" value="1 site, 1 O-linked glycan (1 site)"/>
</dbReference>
<dbReference type="iPTMnet" id="P10301"/>
<dbReference type="MetOSite" id="P10301"/>
<dbReference type="PhosphoSitePlus" id="P10301"/>
<dbReference type="SwissPalm" id="P10301"/>
<dbReference type="BioMuta" id="RRAS"/>
<dbReference type="DMDM" id="133486"/>
<dbReference type="jPOST" id="P10301"/>
<dbReference type="MassIVE" id="P10301"/>
<dbReference type="PaxDb" id="9606-ENSP00000246792"/>
<dbReference type="PeptideAtlas" id="P10301"/>
<dbReference type="ProteomicsDB" id="52595"/>
<dbReference type="Pumba" id="P10301"/>
<dbReference type="Antibodypedia" id="32074">
    <property type="antibodies" value="239 antibodies from 33 providers"/>
</dbReference>
<dbReference type="DNASU" id="6237"/>
<dbReference type="Ensembl" id="ENST00000246792.4">
    <property type="protein sequence ID" value="ENSP00000246792.2"/>
    <property type="gene ID" value="ENSG00000126458.4"/>
</dbReference>
<dbReference type="GeneID" id="6237"/>
<dbReference type="KEGG" id="hsa:6237"/>
<dbReference type="MANE-Select" id="ENST00000246792.4">
    <property type="protein sequence ID" value="ENSP00000246792.2"/>
    <property type="RefSeq nucleotide sequence ID" value="NM_006270.5"/>
    <property type="RefSeq protein sequence ID" value="NP_006261.1"/>
</dbReference>
<dbReference type="UCSC" id="uc002pop.2">
    <property type="organism name" value="human"/>
</dbReference>
<dbReference type="AGR" id="HGNC:10447"/>
<dbReference type="CTD" id="6237"/>
<dbReference type="DisGeNET" id="6237"/>
<dbReference type="GeneCards" id="RRAS"/>
<dbReference type="HGNC" id="HGNC:10447">
    <property type="gene designation" value="RRAS"/>
</dbReference>
<dbReference type="HPA" id="ENSG00000126458">
    <property type="expression patterns" value="Low tissue specificity"/>
</dbReference>
<dbReference type="MalaCards" id="RRAS"/>
<dbReference type="MIM" id="165090">
    <property type="type" value="gene"/>
</dbReference>
<dbReference type="neXtProt" id="NX_P10301"/>
<dbReference type="OpenTargets" id="ENSG00000126458"/>
<dbReference type="Orphanet" id="86834">
    <property type="disease" value="Juvenile myelomonocytic leukemia"/>
</dbReference>
<dbReference type="Orphanet" id="648">
    <property type="disease" value="Noonan syndrome"/>
</dbReference>
<dbReference type="PharmGKB" id="PA34861"/>
<dbReference type="VEuPathDB" id="HostDB:ENSG00000126458"/>
<dbReference type="eggNOG" id="KOG0395">
    <property type="taxonomic scope" value="Eukaryota"/>
</dbReference>
<dbReference type="GeneTree" id="ENSGT00940000160972"/>
<dbReference type="HOGENOM" id="CLU_041217_9_8_1"/>
<dbReference type="InParanoid" id="P10301"/>
<dbReference type="OMA" id="GCPCILL"/>
<dbReference type="OrthoDB" id="5976022at2759"/>
<dbReference type="PAN-GO" id="P10301">
    <property type="GO annotations" value="5 GO annotations based on evolutionary models"/>
</dbReference>
<dbReference type="PhylomeDB" id="P10301"/>
<dbReference type="TreeFam" id="TF312796"/>
<dbReference type="PathwayCommons" id="P10301"/>
<dbReference type="Reactome" id="R-HSA-399955">
    <property type="pathway name" value="SEMA3A-Plexin repulsion signaling by inhibiting Integrin adhesion"/>
</dbReference>
<dbReference type="Reactome" id="R-HSA-416550">
    <property type="pathway name" value="Sema4D mediated inhibition of cell attachment and migration"/>
</dbReference>
<dbReference type="SignaLink" id="P10301"/>
<dbReference type="SIGNOR" id="P10301"/>
<dbReference type="BioGRID-ORCS" id="6237">
    <property type="hits" value="9 hits in 1152 CRISPR screens"/>
</dbReference>
<dbReference type="ChiTaRS" id="RRAS">
    <property type="organism name" value="human"/>
</dbReference>
<dbReference type="EvolutionaryTrace" id="P10301"/>
<dbReference type="GeneWiki" id="RRAS"/>
<dbReference type="GenomeRNAi" id="6237"/>
<dbReference type="Pharos" id="P10301">
    <property type="development level" value="Tbio"/>
</dbReference>
<dbReference type="PRO" id="PR:P10301"/>
<dbReference type="Proteomes" id="UP000005640">
    <property type="component" value="Chromosome 19"/>
</dbReference>
<dbReference type="RNAct" id="P10301">
    <property type="molecule type" value="protein"/>
</dbReference>
<dbReference type="Bgee" id="ENSG00000126458">
    <property type="expression patterns" value="Expressed in right coronary artery and 161 other cell types or tissues"/>
</dbReference>
<dbReference type="ExpressionAtlas" id="P10301">
    <property type="expression patterns" value="baseline and differential"/>
</dbReference>
<dbReference type="GO" id="GO:0070062">
    <property type="term" value="C:extracellular exosome"/>
    <property type="evidence" value="ECO:0007005"/>
    <property type="project" value="UniProtKB"/>
</dbReference>
<dbReference type="GO" id="GO:0005925">
    <property type="term" value="C:focal adhesion"/>
    <property type="evidence" value="ECO:0007005"/>
    <property type="project" value="UniProtKB"/>
</dbReference>
<dbReference type="GO" id="GO:0005886">
    <property type="term" value="C:plasma membrane"/>
    <property type="evidence" value="ECO:0000318"/>
    <property type="project" value="GO_Central"/>
</dbReference>
<dbReference type="GO" id="GO:0019003">
    <property type="term" value="F:GDP binding"/>
    <property type="evidence" value="ECO:0000314"/>
    <property type="project" value="UniProtKB"/>
</dbReference>
<dbReference type="GO" id="GO:0005525">
    <property type="term" value="F:GTP binding"/>
    <property type="evidence" value="ECO:0000318"/>
    <property type="project" value="GO_Central"/>
</dbReference>
<dbReference type="GO" id="GO:0003924">
    <property type="term" value="F:GTPase activity"/>
    <property type="evidence" value="ECO:0000314"/>
    <property type="project" value="UniProtKB"/>
</dbReference>
<dbReference type="GO" id="GO:0044877">
    <property type="term" value="F:protein-containing complex binding"/>
    <property type="evidence" value="ECO:0000314"/>
    <property type="project" value="MGI"/>
</dbReference>
<dbReference type="GO" id="GO:0060325">
    <property type="term" value="P:face morphogenesis"/>
    <property type="evidence" value="ECO:0000315"/>
    <property type="project" value="UniProtKB"/>
</dbReference>
<dbReference type="GO" id="GO:0002521">
    <property type="term" value="P:leukocyte differentiation"/>
    <property type="evidence" value="ECO:0000315"/>
    <property type="project" value="UniProtKB"/>
</dbReference>
<dbReference type="GO" id="GO:1900148">
    <property type="term" value="P:negative regulation of Schwann cell migration"/>
    <property type="evidence" value="ECO:0007669"/>
    <property type="project" value="Ensembl"/>
</dbReference>
<dbReference type="GO" id="GO:0045766">
    <property type="term" value="P:positive regulation of angiogenesis"/>
    <property type="evidence" value="ECO:0000315"/>
    <property type="project" value="UniProtKB"/>
</dbReference>
<dbReference type="GO" id="GO:0010595">
    <property type="term" value="P:positive regulation of endothelial cell migration"/>
    <property type="evidence" value="ECO:0000315"/>
    <property type="project" value="CACAO"/>
</dbReference>
<dbReference type="GO" id="GO:1904906">
    <property type="term" value="P:positive regulation of endothelial cell-matrix adhesion via fibronectin"/>
    <property type="evidence" value="ECO:0000315"/>
    <property type="project" value="CACAO"/>
</dbReference>
<dbReference type="GO" id="GO:2001214">
    <property type="term" value="P:positive regulation of vasculogenesis"/>
    <property type="evidence" value="ECO:0000315"/>
    <property type="project" value="CACAO"/>
</dbReference>
<dbReference type="GO" id="GO:0007265">
    <property type="term" value="P:Ras protein signal transduction"/>
    <property type="evidence" value="ECO:0000304"/>
    <property type="project" value="ProtInc"/>
</dbReference>
<dbReference type="GO" id="GO:0070372">
    <property type="term" value="P:regulation of ERK1 and ERK2 cascade"/>
    <property type="evidence" value="ECO:0000315"/>
    <property type="project" value="UniProtKB"/>
</dbReference>
<dbReference type="GO" id="GO:0051896">
    <property type="term" value="P:regulation of phosphatidylinositol 3-kinase/protein kinase B signal transduction"/>
    <property type="evidence" value="ECO:0000315"/>
    <property type="project" value="UniProtKB"/>
</dbReference>
<dbReference type="GO" id="GO:0036135">
    <property type="term" value="P:Schwann cell migration"/>
    <property type="evidence" value="ECO:0007669"/>
    <property type="project" value="Ensembl"/>
</dbReference>
<dbReference type="CDD" id="cd04145">
    <property type="entry name" value="M_R_Ras_like"/>
    <property type="match status" value="1"/>
</dbReference>
<dbReference type="FunFam" id="3.40.50.300:FF:000080">
    <property type="entry name" value="Ras-like GTPase Ras1"/>
    <property type="match status" value="1"/>
</dbReference>
<dbReference type="Gene3D" id="3.40.50.300">
    <property type="entry name" value="P-loop containing nucleotide triphosphate hydrolases"/>
    <property type="match status" value="1"/>
</dbReference>
<dbReference type="InterPro" id="IPR027417">
    <property type="entry name" value="P-loop_NTPase"/>
</dbReference>
<dbReference type="InterPro" id="IPR005225">
    <property type="entry name" value="Small_GTP-bd"/>
</dbReference>
<dbReference type="InterPro" id="IPR001806">
    <property type="entry name" value="Small_GTPase"/>
</dbReference>
<dbReference type="InterPro" id="IPR020849">
    <property type="entry name" value="Small_GTPase_Ras-type"/>
</dbReference>
<dbReference type="NCBIfam" id="TIGR00231">
    <property type="entry name" value="small_GTP"/>
    <property type="match status" value="1"/>
</dbReference>
<dbReference type="PANTHER" id="PTHR24070">
    <property type="entry name" value="RAS, DI-RAS, AND RHEB FAMILY MEMBERS OF SMALL GTPASE SUPERFAMILY"/>
    <property type="match status" value="1"/>
</dbReference>
<dbReference type="Pfam" id="PF00071">
    <property type="entry name" value="Ras"/>
    <property type="match status" value="1"/>
</dbReference>
<dbReference type="PRINTS" id="PR00449">
    <property type="entry name" value="RASTRNSFRMNG"/>
</dbReference>
<dbReference type="SMART" id="SM00175">
    <property type="entry name" value="RAB"/>
    <property type="match status" value="1"/>
</dbReference>
<dbReference type="SMART" id="SM00176">
    <property type="entry name" value="RAN"/>
    <property type="match status" value="1"/>
</dbReference>
<dbReference type="SMART" id="SM00173">
    <property type="entry name" value="RAS"/>
    <property type="match status" value="1"/>
</dbReference>
<dbReference type="SMART" id="SM00174">
    <property type="entry name" value="RHO"/>
    <property type="match status" value="1"/>
</dbReference>
<dbReference type="SUPFAM" id="SSF52540">
    <property type="entry name" value="P-loop containing nucleoside triphosphate hydrolases"/>
    <property type="match status" value="1"/>
</dbReference>
<dbReference type="PROSITE" id="PS51421">
    <property type="entry name" value="RAS"/>
    <property type="match status" value="1"/>
</dbReference>
<reference key="1">
    <citation type="journal article" date="1987" name="Cell">
        <title>Structure of the human and murine R-ras genes, novel genes closely related to ras proto-oncogenes.</title>
        <authorList>
            <person name="Lowe D.G."/>
            <person name="Capon D.J."/>
            <person name="Delwart E."/>
            <person name="Sakaguchi A.Y."/>
            <person name="Naylor S.L."/>
            <person name="Goeddel D.V."/>
        </authorList>
    </citation>
    <scope>NUCLEOTIDE SEQUENCE [GENOMIC DNA]</scope>
</reference>
<reference key="2">
    <citation type="submission" date="2002-03" db="EMBL/GenBank/DDBJ databases">
        <title>cDNA clones of human proteins involved in signal transduction sequenced by the Guthrie cDNA resource center (www.cdna.org).</title>
        <authorList>
            <person name="Puhl H.L. III"/>
            <person name="Ikeda S.R."/>
            <person name="Aronstam R.S."/>
        </authorList>
    </citation>
    <scope>NUCLEOTIDE SEQUENCE [LARGE SCALE MRNA]</scope>
    <source>
        <tissue>Brain</tissue>
    </source>
</reference>
<reference key="3">
    <citation type="submission" date="2003-05" db="EMBL/GenBank/DDBJ databases">
        <title>Cloning of human full-length CDSs in BD Creator(TM) system donor vector.</title>
        <authorList>
            <person name="Kalnine N."/>
            <person name="Chen X."/>
            <person name="Rolfs A."/>
            <person name="Halleck A."/>
            <person name="Hines L."/>
            <person name="Eisenstein S."/>
            <person name="Koundinya M."/>
            <person name="Raphael J."/>
            <person name="Moreira D."/>
            <person name="Kelley T."/>
            <person name="LaBaer J."/>
            <person name="Lin Y."/>
            <person name="Phelan M."/>
            <person name="Farmer A."/>
        </authorList>
    </citation>
    <scope>NUCLEOTIDE SEQUENCE [LARGE SCALE MRNA]</scope>
</reference>
<reference key="4">
    <citation type="submission" date="2004-06" db="EMBL/GenBank/DDBJ databases">
        <title>Cloning of human full open reading frames in Gateway(TM) system entry vector (pDONR201).</title>
        <authorList>
            <person name="Ebert L."/>
            <person name="Schick M."/>
            <person name="Neubert P."/>
            <person name="Schatten R."/>
            <person name="Henze S."/>
            <person name="Korn B."/>
        </authorList>
    </citation>
    <scope>NUCLEOTIDE SEQUENCE [LARGE SCALE MRNA]</scope>
</reference>
<reference key="5">
    <citation type="submission" date="2005-07" db="EMBL/GenBank/DDBJ databases">
        <authorList>
            <person name="Mural R.J."/>
            <person name="Istrail S."/>
            <person name="Sutton G.G."/>
            <person name="Florea L."/>
            <person name="Halpern A.L."/>
            <person name="Mobarry C.M."/>
            <person name="Lippert R."/>
            <person name="Walenz B."/>
            <person name="Shatkay H."/>
            <person name="Dew I."/>
            <person name="Miller J.R."/>
            <person name="Flanigan M.J."/>
            <person name="Edwards N.J."/>
            <person name="Bolanos R."/>
            <person name="Fasulo D."/>
            <person name="Halldorsson B.V."/>
            <person name="Hannenhalli S."/>
            <person name="Turner R."/>
            <person name="Yooseph S."/>
            <person name="Lu F."/>
            <person name="Nusskern D.R."/>
            <person name="Shue B.C."/>
            <person name="Zheng X.H."/>
            <person name="Zhong F."/>
            <person name="Delcher A.L."/>
            <person name="Huson D.H."/>
            <person name="Kravitz S.A."/>
            <person name="Mouchard L."/>
            <person name="Reinert K."/>
            <person name="Remington K.A."/>
            <person name="Clark A.G."/>
            <person name="Waterman M.S."/>
            <person name="Eichler E.E."/>
            <person name="Adams M.D."/>
            <person name="Hunkapiller M.W."/>
            <person name="Myers E.W."/>
            <person name="Venter J.C."/>
        </authorList>
    </citation>
    <scope>NUCLEOTIDE SEQUENCE [LARGE SCALE GENOMIC DNA]</scope>
</reference>
<reference key="6">
    <citation type="journal article" date="2004" name="Genome Res.">
        <title>The status, quality, and expansion of the NIH full-length cDNA project: the Mammalian Gene Collection (MGC).</title>
        <authorList>
            <consortium name="The MGC Project Team"/>
        </authorList>
    </citation>
    <scope>NUCLEOTIDE SEQUENCE [LARGE SCALE MRNA]</scope>
    <source>
        <tissue>Brain</tissue>
        <tissue>Uterus</tissue>
    </source>
</reference>
<reference key="7">
    <citation type="journal article" date="2004" name="Biochem. J.">
        <title>Vectorial proteomics reveal targeting, phosphorylation and specific fragmentation of polymerase I and transcript release factor (PTRF) at the surface of caveolae in human adipocytes.</title>
        <authorList>
            <person name="Aboulaich N."/>
            <person name="Vainonen J.P."/>
            <person name="Stralfors P."/>
            <person name="Vener A.V."/>
        </authorList>
    </citation>
    <scope>PROTEIN SEQUENCE OF 177-188</scope>
    <source>
        <tissue>Adipocyte</tissue>
    </source>
</reference>
<reference key="8">
    <citation type="journal article" date="2006" name="J. Cell Sci.">
        <title>The small GTPase R-Ras regulates organization of actin and drives membrane protrusions through the activity of PLCepsilon.</title>
        <authorList>
            <person name="Ada-Nguema A.S."/>
            <person name="Xenias H."/>
            <person name="Sheetz M.P."/>
            <person name="Keely P.J."/>
        </authorList>
    </citation>
    <scope>FUNCTION</scope>
    <scope>INTERACTION WITH PLCE1</scope>
</reference>
<reference key="9">
    <citation type="journal article" date="2008" name="J. Cell Sci.">
        <title>The R-Ras interaction partner ORP3 regulates cell adhesion.</title>
        <authorList>
            <person name="Lehto M."/>
            <person name="Maeyraenpaeae M.I."/>
            <person name="Pellinen T."/>
            <person name="Ihalmo P."/>
            <person name="Lehtonen S."/>
            <person name="Kovanen P.T."/>
            <person name="Groop P.H."/>
            <person name="Ivaska J."/>
            <person name="Olkkonen V.M."/>
        </authorList>
    </citation>
    <scope>FUNCTION</scope>
    <scope>INTERACTION WITH OSBPL3</scope>
    <scope>MUTAGENESIS OF GLY-38 AND SER-43</scope>
</reference>
<reference key="10">
    <citation type="journal article" date="2010" name="Biochim. Biophys. Acta">
        <title>Palmitoylation of R-Ras by human DHHC19, a palmitoyl transferase with a CaaX box.</title>
        <authorList>
            <person name="Baumgart F."/>
            <person name="Corral-Escariz M."/>
            <person name="Perez-Gil J."/>
            <person name="Rodriguez-Crespo I."/>
        </authorList>
    </citation>
    <scope>INTERACTION WITH ZDHHC19</scope>
    <scope>PALMITOYLATION</scope>
</reference>
<reference key="11">
    <citation type="journal article" date="2014" name="J. Proteomics">
        <title>An enzyme assisted RP-RPLC approach for in-depth analysis of human liver phosphoproteome.</title>
        <authorList>
            <person name="Bian Y."/>
            <person name="Song C."/>
            <person name="Cheng K."/>
            <person name="Dong M."/>
            <person name="Wang F."/>
            <person name="Huang J."/>
            <person name="Sun D."/>
            <person name="Wang L."/>
            <person name="Ye M."/>
            <person name="Zou H."/>
        </authorList>
    </citation>
    <scope>IDENTIFICATION BY MASS SPECTROMETRY [LARGE SCALE ANALYSIS]</scope>
    <source>
        <tissue>Liver</tissue>
    </source>
</reference>
<reference key="12">
    <citation type="journal article" date="2015" name="Proteomics">
        <title>N-terminome analysis of the human mitochondrial proteome.</title>
        <authorList>
            <person name="Vaca Jacome A.S."/>
            <person name="Rabilloud T."/>
            <person name="Schaeffer-Reiss C."/>
            <person name="Rompais M."/>
            <person name="Ayoub D."/>
            <person name="Lane L."/>
            <person name="Bairoch A."/>
            <person name="Van Dorsselaer A."/>
            <person name="Carapito C."/>
        </authorList>
    </citation>
    <scope>IDENTIFICATION BY MASS SPECTROMETRY [LARGE SCALE ANALYSIS]</scope>
</reference>
<reference key="13">
    <citation type="journal article" date="2025" name="Nat. Commun.">
        <title>The small GTPase MRAS is a broken switch.</title>
        <authorList>
            <person name="Bernal Astrain G."/>
            <person name="Strakhova R."/>
            <person name="Jo C.H."/>
            <person name="Teszner E."/>
            <person name="Killoran R.C."/>
            <person name="Smith M.J."/>
        </authorList>
    </citation>
    <scope>FUNCTION</scope>
    <scope>CATALYTIC ACTIVITY</scope>
</reference>
<reference evidence="11" key="14">
    <citation type="journal article" date="2006" name="Am. J. Hum. Genet.">
        <title>Germline missense mutations affecting KRAS Isoform B are associated with a severe Noonan syndrome phenotype.</title>
        <authorList>
            <person name="Carta C."/>
            <person name="Pantaleoni F."/>
            <person name="Bocchinfuso G."/>
            <person name="Stella L."/>
            <person name="Vasta I."/>
            <person name="Sarkozy A."/>
            <person name="Digilio C."/>
            <person name="Palleschi A."/>
            <person name="Pizzuti A."/>
            <person name="Grammatico P."/>
            <person name="Zampino G."/>
            <person name="Dallapiccola B."/>
            <person name="Gelb B.D."/>
            <person name="Tartaglia M."/>
        </authorList>
    </citation>
    <scope>X-RAY CRYSTALLOGRAPHY (1.65 ANGSTROMS) OF 23-201 IN COMPLEX WITH GDP</scope>
</reference>
<gene>
    <name type="primary">RRAS</name>
</gene>
<sequence length="218" mass="23480">MSSGAASGTGRGRPRGGGPGPGDPPPSETHKLVVVGGGGVGKSALTIQFIQSYFVSDYDPTIEDSYTKICSVDGIPARLDILDTAGQEEFGAMREQYMRAGHGFLLVFAINDRQSFNEVGKLFTQILRVKDRDDFPVVLVGNKADLESQRQVPRSEASAFGASHHVAYFEASAKLRLNVDEAFEQLVRAVRKYQEQELPPSPPSAPRKKGGGCPCVLL</sequence>
<comment type="function">
    <text evidence="5 7 9">GTP-binding protein with GTPase activity, likely involved in the regulation of MAPK signaling pathway and thereby controlling multiple cellular processes (PubMed:39809765). Regulates the organization of the actin cytoskeleton (PubMed:16537651, PubMed:18270267). With OSPBL3, modulates integrin beta-1 (ITGB1) activity (PubMed:18270267).</text>
</comment>
<comment type="catalytic activity">
    <reaction evidence="9">
        <text>GTP + H2O = GDP + phosphate + H(+)</text>
        <dbReference type="Rhea" id="RHEA:19669"/>
        <dbReference type="ChEBI" id="CHEBI:15377"/>
        <dbReference type="ChEBI" id="CHEBI:15378"/>
        <dbReference type="ChEBI" id="CHEBI:37565"/>
        <dbReference type="ChEBI" id="CHEBI:43474"/>
        <dbReference type="ChEBI" id="CHEBI:58189"/>
        <dbReference type="EC" id="3.6.5.2"/>
    </reaction>
    <physiologicalReaction direction="left-to-right" evidence="3">
        <dbReference type="Rhea" id="RHEA:19670"/>
    </physiologicalReaction>
</comment>
<comment type="subunit">
    <text evidence="2 5 7 8">Interacts with PLCE1 (PubMed:16537651). Interacts (active GTP-bound form preferentially) with RGS14 (By similarity). Interacts with OSBPL3 (By similarity) (PubMed:16537651, PubMed:18270267, PubMed:20074548). Interacts with ZDHHC19 (PubMed:20074548).</text>
</comment>
<comment type="interaction">
    <interactant intactId="EBI-968703">
        <id>P10301</id>
    </interactant>
    <interactant intactId="EBI-389883">
        <id>P16333</id>
        <label>NCK1</label>
    </interactant>
    <organismsDiffer>false</organismsDiffer>
    <experiments>3</experiments>
</comment>
<comment type="interaction">
    <interactant intactId="EBI-968703">
        <id>P10301</id>
    </interactant>
    <interactant intactId="EBI-12832744">
        <id>P52306-5</id>
        <label>RAP1GDS1</label>
    </interactant>
    <organismsDiffer>false</organismsDiffer>
    <experiments>3</experiments>
</comment>
<comment type="subcellular location">
    <subcellularLocation>
        <location evidence="1">Cell membrane</location>
        <topology evidence="1">Lipid-anchor</topology>
        <orientation evidence="1">Cytoplasmic side</orientation>
    </subcellularLocation>
    <text>Inner surface of plasma membrane possibly with attachment requiring acylation of the C-terminal cysteine (By similarity with RAS).</text>
</comment>
<comment type="PTM">
    <text evidence="8">S-palmitoylated by ZDHHC19, leading to increased association with membranes and with rafts/caveolae as well as enhanced cell viability.</text>
</comment>
<comment type="similarity">
    <text evidence="10">Belongs to the small GTPase superfamily. Ras family.</text>
</comment>
<evidence type="ECO:0000250" key="1"/>
<evidence type="ECO:0000250" key="2">
    <source>
        <dbReference type="UniProtKB" id="D3Z8L7"/>
    </source>
</evidence>
<evidence type="ECO:0000250" key="3">
    <source>
        <dbReference type="UniProtKB" id="P62070"/>
    </source>
</evidence>
<evidence type="ECO:0000256" key="4">
    <source>
        <dbReference type="SAM" id="MobiDB-lite"/>
    </source>
</evidence>
<evidence type="ECO:0000269" key="5">
    <source>
    </source>
</evidence>
<evidence type="ECO:0000269" key="6">
    <source>
    </source>
</evidence>
<evidence type="ECO:0000269" key="7">
    <source>
    </source>
</evidence>
<evidence type="ECO:0000269" key="8">
    <source>
    </source>
</evidence>
<evidence type="ECO:0000269" key="9">
    <source>
    </source>
</evidence>
<evidence type="ECO:0000305" key="10"/>
<evidence type="ECO:0007744" key="11">
    <source>
        <dbReference type="PDB" id="2FN4"/>
    </source>
</evidence>
<evidence type="ECO:0007829" key="12">
    <source>
        <dbReference type="PDB" id="2FN4"/>
    </source>
</evidence>
<accession>P10301</accession>
<accession>Q6FH12</accession>
<feature type="chain" id="PRO_0000082650" description="Ras-related protein R-Ras">
    <location>
        <begin position="1"/>
        <end position="215"/>
    </location>
</feature>
<feature type="propeptide" id="PRO_0000281300" description="Removed in mature form" evidence="1">
    <location>
        <begin position="216"/>
        <end position="218"/>
    </location>
</feature>
<feature type="region of interest" description="Disordered" evidence="4">
    <location>
        <begin position="1"/>
        <end position="30"/>
    </location>
</feature>
<feature type="short sequence motif" description="Effector region">
    <location>
        <begin position="58"/>
        <end position="66"/>
    </location>
</feature>
<feature type="compositionally biased region" description="Gly residues" evidence="4">
    <location>
        <begin position="7"/>
        <end position="20"/>
    </location>
</feature>
<feature type="binding site" evidence="6">
    <location>
        <begin position="36"/>
        <end position="44"/>
    </location>
    <ligand>
        <name>GTP</name>
        <dbReference type="ChEBI" id="CHEBI:37565"/>
    </ligand>
</feature>
<feature type="binding site" evidence="1">
    <location>
        <begin position="83"/>
        <end position="87"/>
    </location>
    <ligand>
        <name>GTP</name>
        <dbReference type="ChEBI" id="CHEBI:37565"/>
    </ligand>
</feature>
<feature type="binding site" evidence="6">
    <location>
        <begin position="142"/>
        <end position="145"/>
    </location>
    <ligand>
        <name>GTP</name>
        <dbReference type="ChEBI" id="CHEBI:37565"/>
    </ligand>
</feature>
<feature type="binding site" evidence="6">
    <location>
        <begin position="172"/>
        <end position="174"/>
    </location>
    <ligand>
        <name>GTP</name>
        <dbReference type="ChEBI" id="CHEBI:37565"/>
    </ligand>
</feature>
<feature type="modified residue" description="Cysteine methyl ester" evidence="1">
    <location>
        <position position="215"/>
    </location>
</feature>
<feature type="lipid moiety-binding region" description="S-geranylgeranyl cysteine" evidence="1">
    <location>
        <position position="215"/>
    </location>
</feature>
<feature type="mutagenesis site" description="No effect on interaction with OSBPL3." evidence="7">
    <original>G</original>
    <variation>V</variation>
    <location>
        <position position="38"/>
    </location>
</feature>
<feature type="mutagenesis site" description="No effect on interaction with OSBPL3." evidence="7">
    <original>S</original>
    <variation>N</variation>
    <location>
        <position position="43"/>
    </location>
</feature>
<feature type="strand" evidence="12">
    <location>
        <begin position="29"/>
        <end position="36"/>
    </location>
</feature>
<feature type="helix" evidence="12">
    <location>
        <begin position="42"/>
        <end position="51"/>
    </location>
</feature>
<feature type="strand" evidence="12">
    <location>
        <begin position="64"/>
        <end position="72"/>
    </location>
</feature>
<feature type="strand" evidence="12">
    <location>
        <begin position="75"/>
        <end position="83"/>
    </location>
</feature>
<feature type="turn" evidence="12">
    <location>
        <begin position="87"/>
        <end position="90"/>
    </location>
</feature>
<feature type="helix" evidence="12">
    <location>
        <begin position="94"/>
        <end position="100"/>
    </location>
</feature>
<feature type="strand" evidence="12">
    <location>
        <begin position="102"/>
        <end position="109"/>
    </location>
</feature>
<feature type="helix" evidence="12">
    <location>
        <begin position="113"/>
        <end position="130"/>
    </location>
</feature>
<feature type="strand" evidence="12">
    <location>
        <begin position="137"/>
        <end position="142"/>
    </location>
</feature>
<feature type="helix" evidence="12">
    <location>
        <begin position="144"/>
        <end position="149"/>
    </location>
</feature>
<feature type="helix" evidence="12">
    <location>
        <begin position="154"/>
        <end position="163"/>
    </location>
</feature>
<feature type="strand" evidence="12">
    <location>
        <begin position="167"/>
        <end position="170"/>
    </location>
</feature>
<feature type="turn" evidence="12">
    <location>
        <begin position="173"/>
        <end position="176"/>
    </location>
</feature>
<feature type="helix" evidence="12">
    <location>
        <begin position="179"/>
        <end position="193"/>
    </location>
</feature>
<protein>
    <recommendedName>
        <fullName>Ras-related protein R-Ras</fullName>
        <ecNumber evidence="9">3.6.5.2</ecNumber>
    </recommendedName>
    <alternativeName>
        <fullName>p23</fullName>
    </alternativeName>
</protein>